<protein>
    <recommendedName>
        <fullName evidence="1">Replication factor C large subunit</fullName>
        <shortName evidence="1">RFC large subunit</shortName>
    </recommendedName>
    <alternativeName>
        <fullName evidence="1">Clamp loader large subunit</fullName>
    </alternativeName>
</protein>
<name>RFCL_SULAC</name>
<accession>Q4JAB1</accession>
<evidence type="ECO:0000255" key="1">
    <source>
        <dbReference type="HAMAP-Rule" id="MF_01508"/>
    </source>
</evidence>
<evidence type="ECO:0000256" key="2">
    <source>
        <dbReference type="SAM" id="MobiDB-lite"/>
    </source>
</evidence>
<dbReference type="EMBL" id="CP000077">
    <property type="protein sequence ID" value="AAY80269.1"/>
    <property type="molecule type" value="Genomic_DNA"/>
</dbReference>
<dbReference type="RefSeq" id="WP_011277771.1">
    <property type="nucleotide sequence ID" value="NC_007181.1"/>
</dbReference>
<dbReference type="SMR" id="Q4JAB1"/>
<dbReference type="STRING" id="330779.Saci_0906"/>
<dbReference type="GeneID" id="14551417"/>
<dbReference type="KEGG" id="sai:Saci_0906"/>
<dbReference type="PATRIC" id="fig|330779.12.peg.866"/>
<dbReference type="eggNOG" id="arCOG00470">
    <property type="taxonomic scope" value="Archaea"/>
</dbReference>
<dbReference type="HOGENOM" id="CLU_027255_1_1_2"/>
<dbReference type="Proteomes" id="UP000001018">
    <property type="component" value="Chromosome"/>
</dbReference>
<dbReference type="GO" id="GO:0005524">
    <property type="term" value="F:ATP binding"/>
    <property type="evidence" value="ECO:0007669"/>
    <property type="project" value="UniProtKB-UniRule"/>
</dbReference>
<dbReference type="GO" id="GO:0016887">
    <property type="term" value="F:ATP hydrolysis activity"/>
    <property type="evidence" value="ECO:0007669"/>
    <property type="project" value="InterPro"/>
</dbReference>
<dbReference type="GO" id="GO:0003689">
    <property type="term" value="F:DNA clamp loader activity"/>
    <property type="evidence" value="ECO:0007669"/>
    <property type="project" value="UniProtKB-UniRule"/>
</dbReference>
<dbReference type="GO" id="GO:0006260">
    <property type="term" value="P:DNA replication"/>
    <property type="evidence" value="ECO:0007669"/>
    <property type="project" value="UniProtKB-UniRule"/>
</dbReference>
<dbReference type="CDD" id="cd00009">
    <property type="entry name" value="AAA"/>
    <property type="match status" value="1"/>
</dbReference>
<dbReference type="CDD" id="cd18140">
    <property type="entry name" value="HLD_clamp_RFC"/>
    <property type="match status" value="1"/>
</dbReference>
<dbReference type="Gene3D" id="1.10.8.60">
    <property type="match status" value="1"/>
</dbReference>
<dbReference type="Gene3D" id="3.40.50.300">
    <property type="entry name" value="P-loop containing nucleotide triphosphate hydrolases"/>
    <property type="match status" value="1"/>
</dbReference>
<dbReference type="HAMAP" id="MF_01508">
    <property type="entry name" value="RfcL"/>
    <property type="match status" value="1"/>
</dbReference>
<dbReference type="InterPro" id="IPR003593">
    <property type="entry name" value="AAA+_ATPase"/>
</dbReference>
<dbReference type="InterPro" id="IPR003959">
    <property type="entry name" value="ATPase_AAA_core"/>
</dbReference>
<dbReference type="InterPro" id="IPR027417">
    <property type="entry name" value="P-loop_NTPase"/>
</dbReference>
<dbReference type="InterPro" id="IPR023935">
    <property type="entry name" value="Rep_factor-C_lsu"/>
</dbReference>
<dbReference type="InterPro" id="IPR047854">
    <property type="entry name" value="RFC_lid"/>
</dbReference>
<dbReference type="NCBIfam" id="NF003226">
    <property type="entry name" value="PRK04195.1-1"/>
    <property type="match status" value="1"/>
</dbReference>
<dbReference type="NCBIfam" id="NF003229">
    <property type="entry name" value="PRK04195.1-5"/>
    <property type="match status" value="1"/>
</dbReference>
<dbReference type="PANTHER" id="PTHR23389">
    <property type="entry name" value="CHROMOSOME TRANSMISSION FIDELITY FACTOR 18"/>
    <property type="match status" value="1"/>
</dbReference>
<dbReference type="PANTHER" id="PTHR23389:SF6">
    <property type="entry name" value="REPLICATION FACTOR C SUBUNIT 1"/>
    <property type="match status" value="1"/>
</dbReference>
<dbReference type="Pfam" id="PF00004">
    <property type="entry name" value="AAA"/>
    <property type="match status" value="1"/>
</dbReference>
<dbReference type="SMART" id="SM00382">
    <property type="entry name" value="AAA"/>
    <property type="match status" value="1"/>
</dbReference>
<dbReference type="SUPFAM" id="SSF52540">
    <property type="entry name" value="P-loop containing nucleoside triphosphate hydrolases"/>
    <property type="match status" value="1"/>
</dbReference>
<reference key="1">
    <citation type="journal article" date="2005" name="J. Bacteriol.">
        <title>The genome of Sulfolobus acidocaldarius, a model organism of the Crenarchaeota.</title>
        <authorList>
            <person name="Chen L."/>
            <person name="Bruegger K."/>
            <person name="Skovgaard M."/>
            <person name="Redder P."/>
            <person name="She Q."/>
            <person name="Torarinsson E."/>
            <person name="Greve B."/>
            <person name="Awayez M."/>
            <person name="Zibat A."/>
            <person name="Klenk H.-P."/>
            <person name="Garrett R.A."/>
        </authorList>
    </citation>
    <scope>NUCLEOTIDE SEQUENCE [LARGE SCALE GENOMIC DNA]</scope>
    <source>
        <strain>ATCC 33909 / DSM 639 / JCM 8929 / NBRC 15157 / NCIMB 11770</strain>
    </source>
</reference>
<feature type="chain" id="PRO_0000135965" description="Replication factor C large subunit">
    <location>
        <begin position="1"/>
        <end position="437"/>
    </location>
</feature>
<feature type="region of interest" description="Disordered" evidence="2">
    <location>
        <begin position="410"/>
        <end position="437"/>
    </location>
</feature>
<feature type="compositionally biased region" description="Basic and acidic residues" evidence="2">
    <location>
        <begin position="416"/>
        <end position="425"/>
    </location>
</feature>
<feature type="compositionally biased region" description="Basic residues" evidence="2">
    <location>
        <begin position="426"/>
        <end position="437"/>
    </location>
</feature>
<feature type="binding site" evidence="1">
    <location>
        <begin position="48"/>
        <end position="55"/>
    </location>
    <ligand>
        <name>ATP</name>
        <dbReference type="ChEBI" id="CHEBI:30616"/>
    </ligand>
</feature>
<comment type="function">
    <text evidence="1">Part of the RFC clamp loader complex which loads the PCNA sliding clamp onto DNA.</text>
</comment>
<comment type="subunit">
    <text evidence="1">Heteromultimer composed of small subunits (RfcS) and large subunits (RfcL).</text>
</comment>
<comment type="similarity">
    <text evidence="1">Belongs to the activator 1 small subunits family. RfcL subfamily.</text>
</comment>
<sequence>MPLQWFLKYRPKSLQEVENQDEVKEELKKWIESWLNGEPTAKAVLLYGPPGVGKTTLAEALARDYKLELLEMNASDSRNLRDIKDVAERASISGSLFGIKGKIILLDEIDGIYSRADAGAIPAILELIEKTKYPVILTANDPWDPSLRSLRNAVKMIELKRLGKYPLKRLLKRICEKEKIVCIDEALDHIIEQSEGDARYCINMLQGIAEGYGKVTLDNVKELVRRKDRELDPFETLRDVFWAKYYWQAKNAVTNSQVDYELLMRWFDENIPLQYTSMEDVWRAYEALSRASVFLTRAKQVGWDLLSYVFDLMGPGIAFASLEKKKPGYKARWVKYQFPQYIQALARTKEKRDSIETLLKKIGEKTHTSKRKVLNDTLPFLASYYTRHAEAVENYLQLTEGEKEILNVFTQASKPTSEEKAEKSKKYYPKRSSSRKT</sequence>
<gene>
    <name evidence="1" type="primary">rfcL</name>
    <name type="ordered locus">Saci_0906</name>
</gene>
<keyword id="KW-0067">ATP-binding</keyword>
<keyword id="KW-0235">DNA replication</keyword>
<keyword id="KW-0547">Nucleotide-binding</keyword>
<keyword id="KW-1185">Reference proteome</keyword>
<organism>
    <name type="scientific">Sulfolobus acidocaldarius (strain ATCC 33909 / DSM 639 / JCM 8929 / NBRC 15157 / NCIMB 11770)</name>
    <dbReference type="NCBI Taxonomy" id="330779"/>
    <lineage>
        <taxon>Archaea</taxon>
        <taxon>Thermoproteota</taxon>
        <taxon>Thermoprotei</taxon>
        <taxon>Sulfolobales</taxon>
        <taxon>Sulfolobaceae</taxon>
        <taxon>Sulfolobus</taxon>
    </lineage>
</organism>
<proteinExistence type="inferred from homology"/>